<gene>
    <name type="primary">TUB1</name>
    <name type="ordered locus">YML085C</name>
</gene>
<accession>P09733</accession>
<accession>D6W0J8</accession>
<sequence length="447" mass="49800">MREVISINVGQAGCQIGNACWELYSLEHGIKPDGHLEDGLSKPKGGEEGFSTFFHETGYGKFVPRAIYVDLEPNVIDEVRNGPYKDLFHPEQLISGKEDAANNYARGHYTVGREILGDVLDRIRKLADQCDGLQGFLFTHSLGGGTGSGLGSLLLEELSAEYGKKSKLEFAVYPAPQVSTSVVEPYNTVLTTHTTLEHADCTFMVDNEAIYDMCKRNLDIPRPSFANLNNLIAQVVSSVTASLRFDGSLNVDLNEFQTNLVPYPRIHFPLVSYSPVLSKSKAFHESNSVSEITNACFEPGNQMVKCDPRDGKYMATCLLYRGDVVTRDVQRAVEQVKNKKTVQLVDWCPTGFKIGICYEPPTATPNSQLATVDRAVCMLSNTTSIAEAWKRIDRKFDLMYAKRAFVHWYVGEGMEEGEFTEAREDLAALERDYIEVGADSYAEEEEF</sequence>
<keyword id="KW-0002">3D-structure</keyword>
<keyword id="KW-0963">Cytoplasm</keyword>
<keyword id="KW-0206">Cytoskeleton</keyword>
<keyword id="KW-0342">GTP-binding</keyword>
<keyword id="KW-0378">Hydrolase</keyword>
<keyword id="KW-0460">Magnesium</keyword>
<keyword id="KW-0479">Metal-binding</keyword>
<keyword id="KW-0493">Microtubule</keyword>
<keyword id="KW-0547">Nucleotide-binding</keyword>
<keyword id="KW-1185">Reference proteome</keyword>
<protein>
    <recommendedName>
        <fullName>Tubulin alpha-1 chain</fullName>
        <ecNumber evidence="1">3.6.5.-</ecNumber>
    </recommendedName>
</protein>
<name>TBA1_YEAST</name>
<comment type="function">
    <text evidence="2">Tubulin is the major constituent of microtubules, a cylinder consisting of laterally associated linear protofilaments composed of alpha- and beta-tubulin heterodimers (PubMed:11739794). Microtubules grow by the addition of GTP-tubulin dimers to the microtubule end, where a stabilizing cap forms. Below the cap, tubulin dimers are in GDP-bound state, owing to GTPase activity of alpha-tubulin.</text>
</comment>
<comment type="catalytic activity">
    <reaction evidence="1">
        <text>GTP + H2O = GDP + phosphate + H(+)</text>
        <dbReference type="Rhea" id="RHEA:19669"/>
        <dbReference type="ChEBI" id="CHEBI:15377"/>
        <dbReference type="ChEBI" id="CHEBI:15378"/>
        <dbReference type="ChEBI" id="CHEBI:37565"/>
        <dbReference type="ChEBI" id="CHEBI:43474"/>
        <dbReference type="ChEBI" id="CHEBI:58189"/>
    </reaction>
    <physiologicalReaction direction="left-to-right" evidence="1">
        <dbReference type="Rhea" id="RHEA:19670"/>
    </physiologicalReaction>
</comment>
<comment type="cofactor">
    <cofactor evidence="1">
        <name>Mg(2+)</name>
        <dbReference type="ChEBI" id="CHEBI:18420"/>
    </cofactor>
</comment>
<comment type="subunit">
    <text evidence="2">Dimer of alpha and beta chains (PubMed:11739794). A typical microtubule is a hollow water-filled tube with an outer diameter of 25 nm and an inner diameter of 15 nM. Alpha-beta heterodimers associate head-to-tail to form protofilaments running lengthwise along the microtubule wall with the beta-tubulin subunit facing the microtubule plus end conferring a structural polarity. Microtubules usually have 13 protofilaments but different protofilament numbers can be found in some organisms and specialized cells.</text>
</comment>
<comment type="interaction">
    <interactant intactId="EBI-18976">
        <id>P09733</id>
    </interactant>
    <interactant intactId="EBI-18986">
        <id>P02557</id>
        <label>TUB2</label>
    </interactant>
    <organismsDiffer>false</organismsDiffer>
    <experiments>2</experiments>
</comment>
<comment type="subcellular location">
    <subcellularLocation>
        <location evidence="2">Cytoplasm</location>
        <location evidence="2">Cytoskeleton</location>
    </subcellularLocation>
</comment>
<comment type="miscellaneous">
    <text evidence="3">Present with 5590 molecules/cell in log phase SD medium.</text>
</comment>
<comment type="similarity">
    <text evidence="4">Belongs to the tubulin family.</text>
</comment>
<proteinExistence type="evidence at protein level"/>
<reference key="1">
    <citation type="journal article" date="1986" name="Mol. Cell. Biol.">
        <title>Two functional alpha-tubulin genes of the yeast Saccharomyces cerevisiae encode divergent proteins.</title>
        <authorList>
            <person name="Schatz P.J."/>
            <person name="Pillus L."/>
            <person name="Grisafi P."/>
            <person name="Solomon F."/>
            <person name="Botstein D."/>
        </authorList>
    </citation>
    <scope>NUCLEOTIDE SEQUENCE</scope>
</reference>
<reference key="2">
    <citation type="journal article" date="1997" name="Nature">
        <title>The nucleotide sequence of Saccharomyces cerevisiae chromosome XIII.</title>
        <authorList>
            <person name="Bowman S."/>
            <person name="Churcher C.M."/>
            <person name="Badcock K."/>
            <person name="Brown D."/>
            <person name="Chillingworth T."/>
            <person name="Connor R."/>
            <person name="Dedman K."/>
            <person name="Devlin K."/>
            <person name="Gentles S."/>
            <person name="Hamlin N."/>
            <person name="Hunt S."/>
            <person name="Jagels K."/>
            <person name="Lye G."/>
            <person name="Moule S."/>
            <person name="Odell C."/>
            <person name="Pearson D."/>
            <person name="Rajandream M.A."/>
            <person name="Rice P."/>
            <person name="Skelton J."/>
            <person name="Walsh S.V."/>
            <person name="Whitehead S."/>
            <person name="Barrell B.G."/>
        </authorList>
    </citation>
    <scope>NUCLEOTIDE SEQUENCE [LARGE SCALE GENOMIC DNA]</scope>
    <source>
        <strain>ATCC 204508 / S288c</strain>
    </source>
</reference>
<reference key="3">
    <citation type="journal article" date="2014" name="G3 (Bethesda)">
        <title>The reference genome sequence of Saccharomyces cerevisiae: Then and now.</title>
        <authorList>
            <person name="Engel S.R."/>
            <person name="Dietrich F.S."/>
            <person name="Fisk D.G."/>
            <person name="Binkley G."/>
            <person name="Balakrishnan R."/>
            <person name="Costanzo M.C."/>
            <person name="Dwight S.S."/>
            <person name="Hitz B.C."/>
            <person name="Karra K."/>
            <person name="Nash R.S."/>
            <person name="Weng S."/>
            <person name="Wong E.D."/>
            <person name="Lloyd P."/>
            <person name="Skrzypek M.S."/>
            <person name="Miyasato S.R."/>
            <person name="Simison M."/>
            <person name="Cherry J.M."/>
        </authorList>
    </citation>
    <scope>GENOME REANNOTATION</scope>
    <source>
        <strain>ATCC 204508 / S288c</strain>
    </source>
</reference>
<reference key="4">
    <citation type="journal article" date="2003" name="Nature">
        <title>Global analysis of protein expression in yeast.</title>
        <authorList>
            <person name="Ghaemmaghami S."/>
            <person name="Huh W.-K."/>
            <person name="Bower K."/>
            <person name="Howson R.W."/>
            <person name="Belle A."/>
            <person name="Dephoure N."/>
            <person name="O'Shea E.K."/>
            <person name="Weissman J.S."/>
        </authorList>
    </citation>
    <scope>LEVEL OF PROTEIN EXPRESSION [LARGE SCALE ANALYSIS]</scope>
</reference>
<reference key="5">
    <citation type="journal article" date="2009" name="Science">
        <title>Global analysis of Cdk1 substrate phosphorylation sites provides insights into evolution.</title>
        <authorList>
            <person name="Holt L.J."/>
            <person name="Tuch B.B."/>
            <person name="Villen J."/>
            <person name="Johnson A.D."/>
            <person name="Gygi S.P."/>
            <person name="Morgan D.O."/>
        </authorList>
    </citation>
    <scope>IDENTIFICATION BY MASS SPECTROMETRY [LARGE SCALE ANALYSIS]</scope>
</reference>
<reference key="6">
    <citation type="journal article" date="2001" name="Mol. Biol. Cell">
        <title>Dominant-lethal alpha-tubulin mutants defective in microtubule depolymerization in yeast.</title>
        <authorList>
            <person name="Anders K.R."/>
            <person name="Botstein D."/>
        </authorList>
    </citation>
    <scope>FUNCTION</scope>
    <scope>CATALYTIC ACTIVITY</scope>
    <scope>SUBUNIT</scope>
    <scope>SUBCELLULAR LOCATION</scope>
    <scope>ACTIVE SITE</scope>
    <scope>MUTAGENESIS OF ASP-252 AND GLU-255</scope>
</reference>
<organism>
    <name type="scientific">Saccharomyces cerevisiae (strain ATCC 204508 / S288c)</name>
    <name type="common">Baker's yeast</name>
    <dbReference type="NCBI Taxonomy" id="559292"/>
    <lineage>
        <taxon>Eukaryota</taxon>
        <taxon>Fungi</taxon>
        <taxon>Dikarya</taxon>
        <taxon>Ascomycota</taxon>
        <taxon>Saccharomycotina</taxon>
        <taxon>Saccharomycetes</taxon>
        <taxon>Saccharomycetales</taxon>
        <taxon>Saccharomycetaceae</taxon>
        <taxon>Saccharomyces</taxon>
    </lineage>
</organism>
<evidence type="ECO:0000250" key="1">
    <source>
        <dbReference type="UniProtKB" id="P68363"/>
    </source>
</evidence>
<evidence type="ECO:0000269" key="2">
    <source>
    </source>
</evidence>
<evidence type="ECO:0000269" key="3">
    <source>
    </source>
</evidence>
<evidence type="ECO:0000305" key="4"/>
<evidence type="ECO:0000305" key="5">
    <source>
    </source>
</evidence>
<evidence type="ECO:0007829" key="6">
    <source>
        <dbReference type="PDB" id="4FFB"/>
    </source>
</evidence>
<evidence type="ECO:0007829" key="7">
    <source>
        <dbReference type="PDB" id="4U3J"/>
    </source>
</evidence>
<dbReference type="EC" id="3.6.5.-" evidence="1"/>
<dbReference type="EMBL" id="M28429">
    <property type="protein sequence ID" value="AAA35180.1"/>
    <property type="molecule type" value="mRNA"/>
</dbReference>
<dbReference type="EMBL" id="Z46660">
    <property type="protein sequence ID" value="CAA86653.1"/>
    <property type="molecule type" value="Genomic_DNA"/>
</dbReference>
<dbReference type="EMBL" id="BK006946">
    <property type="protein sequence ID" value="DAA09812.1"/>
    <property type="molecule type" value="Genomic_DNA"/>
</dbReference>
<dbReference type="PIR" id="S50871">
    <property type="entry name" value="S50871"/>
</dbReference>
<dbReference type="RefSeq" id="NP_013625.1">
    <property type="nucleotide sequence ID" value="NM_001182444.1"/>
</dbReference>
<dbReference type="PDB" id="4FFB">
    <property type="method" value="X-ray"/>
    <property type="resolution" value="2.88 A"/>
    <property type="chains" value="A=1-447"/>
</dbReference>
<dbReference type="PDB" id="4U3J">
    <property type="method" value="X-ray"/>
    <property type="resolution" value="2.81 A"/>
    <property type="chains" value="A=1-447"/>
</dbReference>
<dbReference type="PDB" id="5W3F">
    <property type="method" value="EM"/>
    <property type="resolution" value="3.70 A"/>
    <property type="chains" value="A=1-447"/>
</dbReference>
<dbReference type="PDB" id="5W3H">
    <property type="method" value="EM"/>
    <property type="resolution" value="4.00 A"/>
    <property type="chains" value="A=1-447"/>
</dbReference>
<dbReference type="PDB" id="5W3J">
    <property type="method" value="EM"/>
    <property type="resolution" value="4.00 A"/>
    <property type="chains" value="A=1-447"/>
</dbReference>
<dbReference type="PDB" id="8QV0">
    <property type="method" value="EM"/>
    <property type="resolution" value="6.60 A"/>
    <property type="chains" value="A/C/D/E/F/G/H/I/J/K/L/M/N=1-447"/>
</dbReference>
<dbReference type="PDB" id="8QV2">
    <property type="method" value="EM"/>
    <property type="resolution" value="9.20 A"/>
    <property type="chains" value="Ab/Ac/Ad/Ae/Af/Ag/Ah/Ai/Aj/Ak/Al/Am/An/Ao/Ap/Aq/Ar=1-447"/>
</dbReference>
<dbReference type="PDB" id="8QV3">
    <property type="method" value="EM"/>
    <property type="resolution" value="8.20 A"/>
    <property type="chains" value="Ac/Ad=1-447"/>
</dbReference>
<dbReference type="PDBsum" id="4FFB"/>
<dbReference type="PDBsum" id="4U3J"/>
<dbReference type="PDBsum" id="5W3F"/>
<dbReference type="PDBsum" id="5W3H"/>
<dbReference type="PDBsum" id="5W3J"/>
<dbReference type="PDBsum" id="8QV0"/>
<dbReference type="PDBsum" id="8QV2"/>
<dbReference type="PDBsum" id="8QV3"/>
<dbReference type="EMDB" id="EMD-18664"/>
<dbReference type="EMDB" id="EMD-18665"/>
<dbReference type="EMDB" id="EMD-18666"/>
<dbReference type="EMDB" id="EMD-8755"/>
<dbReference type="EMDB" id="EMD-8756"/>
<dbReference type="EMDB" id="EMD-8757"/>
<dbReference type="EMDB" id="EMD-8758"/>
<dbReference type="EMDB" id="EMD-8759"/>
<dbReference type="SMR" id="P09733"/>
<dbReference type="BioGRID" id="35056">
    <property type="interactions" value="388"/>
</dbReference>
<dbReference type="ComplexPortal" id="CPX-1424">
    <property type="entry name" value="Tubulin alpha-beta heterodimeric complex, TUB1 variant"/>
</dbReference>
<dbReference type="DIP" id="DIP-854N"/>
<dbReference type="FunCoup" id="P09733">
    <property type="interactions" value="1615"/>
</dbReference>
<dbReference type="IntAct" id="P09733">
    <property type="interactions" value="337"/>
</dbReference>
<dbReference type="MINT" id="P09733"/>
<dbReference type="STRING" id="4932.YML085C"/>
<dbReference type="iPTMnet" id="P09733"/>
<dbReference type="SwissPalm" id="P09733"/>
<dbReference type="PaxDb" id="4932-YML085C"/>
<dbReference type="PeptideAtlas" id="P09733"/>
<dbReference type="EnsemblFungi" id="YML085C_mRNA">
    <property type="protein sequence ID" value="YML085C"/>
    <property type="gene ID" value="YML085C"/>
</dbReference>
<dbReference type="GeneID" id="854889"/>
<dbReference type="KEGG" id="sce:YML085C"/>
<dbReference type="AGR" id="SGD:S000004550"/>
<dbReference type="SGD" id="S000004550">
    <property type="gene designation" value="TUB1"/>
</dbReference>
<dbReference type="VEuPathDB" id="FungiDB:YML085C"/>
<dbReference type="eggNOG" id="KOG1376">
    <property type="taxonomic scope" value="Eukaryota"/>
</dbReference>
<dbReference type="GeneTree" id="ENSGT00940000164588"/>
<dbReference type="HOGENOM" id="CLU_015718_0_0_1"/>
<dbReference type="InParanoid" id="P09733"/>
<dbReference type="OMA" id="ESCYDIC"/>
<dbReference type="OrthoDB" id="1662883at2759"/>
<dbReference type="BioCyc" id="YEAST:G3O-32674-MONOMER"/>
<dbReference type="Reactome" id="R-SCE-114608">
    <property type="pathway name" value="Platelet degranulation"/>
</dbReference>
<dbReference type="BioGRID-ORCS" id="854889">
    <property type="hits" value="4 hits in 10 CRISPR screens"/>
</dbReference>
<dbReference type="CD-CODE" id="876000F7">
    <property type="entry name" value="Centrosome"/>
</dbReference>
<dbReference type="CD-CODE" id="E03F929F">
    <property type="entry name" value="Stress granule"/>
</dbReference>
<dbReference type="EvolutionaryTrace" id="P09733"/>
<dbReference type="PRO" id="PR:P09733"/>
<dbReference type="Proteomes" id="UP000002311">
    <property type="component" value="Chromosome XIII"/>
</dbReference>
<dbReference type="RNAct" id="P09733">
    <property type="molecule type" value="protein"/>
</dbReference>
<dbReference type="GO" id="GO:0005737">
    <property type="term" value="C:cytoplasm"/>
    <property type="evidence" value="ECO:0007005"/>
    <property type="project" value="SGD"/>
</dbReference>
<dbReference type="GO" id="GO:0005874">
    <property type="term" value="C:microtubule"/>
    <property type="evidence" value="ECO:0000318"/>
    <property type="project" value="GO_Central"/>
</dbReference>
<dbReference type="GO" id="GO:0034399">
    <property type="term" value="C:nuclear periphery"/>
    <property type="evidence" value="ECO:0000314"/>
    <property type="project" value="SGD"/>
</dbReference>
<dbReference type="GO" id="GO:0005634">
    <property type="term" value="C:nucleus"/>
    <property type="evidence" value="ECO:0007005"/>
    <property type="project" value="SGD"/>
</dbReference>
<dbReference type="GO" id="GO:0005819">
    <property type="term" value="C:spindle"/>
    <property type="evidence" value="ECO:0000318"/>
    <property type="project" value="GO_Central"/>
</dbReference>
<dbReference type="GO" id="GO:0045298">
    <property type="term" value="C:tubulin complex"/>
    <property type="evidence" value="ECO:0000314"/>
    <property type="project" value="SGD"/>
</dbReference>
<dbReference type="GO" id="GO:0005525">
    <property type="term" value="F:GTP binding"/>
    <property type="evidence" value="ECO:0000318"/>
    <property type="project" value="GO_Central"/>
</dbReference>
<dbReference type="GO" id="GO:0016787">
    <property type="term" value="F:hydrolase activity"/>
    <property type="evidence" value="ECO:0007669"/>
    <property type="project" value="UniProtKB-KW"/>
</dbReference>
<dbReference type="GO" id="GO:0046872">
    <property type="term" value="F:metal ion binding"/>
    <property type="evidence" value="ECO:0007669"/>
    <property type="project" value="UniProtKB-KW"/>
</dbReference>
<dbReference type="GO" id="GO:0005200">
    <property type="term" value="F:structural constituent of cytoskeleton"/>
    <property type="evidence" value="ECO:0000318"/>
    <property type="project" value="GO_Central"/>
</dbReference>
<dbReference type="GO" id="GO:0045143">
    <property type="term" value="P:homologous chromosome segregation"/>
    <property type="evidence" value="ECO:0000315"/>
    <property type="project" value="SGD"/>
</dbReference>
<dbReference type="GO" id="GO:0000226">
    <property type="term" value="P:microtubule cytoskeleton organization"/>
    <property type="evidence" value="ECO:0000315"/>
    <property type="project" value="ComplexPortal"/>
</dbReference>
<dbReference type="GO" id="GO:0000278">
    <property type="term" value="P:mitotic cell cycle"/>
    <property type="evidence" value="ECO:0000318"/>
    <property type="project" value="GO_Central"/>
</dbReference>
<dbReference type="GO" id="GO:0000070">
    <property type="term" value="P:mitotic sister chromatid segregation"/>
    <property type="evidence" value="ECO:0000315"/>
    <property type="project" value="SGD"/>
</dbReference>
<dbReference type="GO" id="GO:0000280">
    <property type="term" value="P:nuclear division"/>
    <property type="evidence" value="ECO:0000318"/>
    <property type="project" value="GO_Central"/>
</dbReference>
<dbReference type="GO" id="GO:0030473">
    <property type="term" value="P:nuclear migration along microtubule"/>
    <property type="evidence" value="ECO:0000315"/>
    <property type="project" value="SGD"/>
</dbReference>
<dbReference type="GO" id="GO:0098863">
    <property type="term" value="P:nuclear migration by microtubule mediated pushing forces"/>
    <property type="evidence" value="ECO:0000318"/>
    <property type="project" value="GO_Central"/>
</dbReference>
<dbReference type="CDD" id="cd02186">
    <property type="entry name" value="alpha_tubulin"/>
    <property type="match status" value="1"/>
</dbReference>
<dbReference type="FunFam" id="1.10.287.600:FF:000005">
    <property type="entry name" value="Tubulin alpha chain"/>
    <property type="match status" value="1"/>
</dbReference>
<dbReference type="FunFam" id="3.30.1330.20:FF:000001">
    <property type="entry name" value="Tubulin alpha chain"/>
    <property type="match status" value="1"/>
</dbReference>
<dbReference type="FunFam" id="3.40.50.1440:FF:000008">
    <property type="entry name" value="Tubulin alpha chain"/>
    <property type="match status" value="1"/>
</dbReference>
<dbReference type="Gene3D" id="1.10.287.600">
    <property type="entry name" value="Helix hairpin bin"/>
    <property type="match status" value="1"/>
</dbReference>
<dbReference type="Gene3D" id="3.30.1330.20">
    <property type="entry name" value="Tubulin/FtsZ, C-terminal domain"/>
    <property type="match status" value="1"/>
</dbReference>
<dbReference type="Gene3D" id="3.40.50.1440">
    <property type="entry name" value="Tubulin/FtsZ, GTPase domain"/>
    <property type="match status" value="1"/>
</dbReference>
<dbReference type="InterPro" id="IPR002452">
    <property type="entry name" value="Alpha_tubulin"/>
</dbReference>
<dbReference type="InterPro" id="IPR008280">
    <property type="entry name" value="Tub_FtsZ_C"/>
</dbReference>
<dbReference type="InterPro" id="IPR000217">
    <property type="entry name" value="Tubulin"/>
</dbReference>
<dbReference type="InterPro" id="IPR037103">
    <property type="entry name" value="Tubulin/FtsZ-like_C"/>
</dbReference>
<dbReference type="InterPro" id="IPR018316">
    <property type="entry name" value="Tubulin/FtsZ_2-layer-sand-dom"/>
</dbReference>
<dbReference type="InterPro" id="IPR036525">
    <property type="entry name" value="Tubulin/FtsZ_GTPase_sf"/>
</dbReference>
<dbReference type="InterPro" id="IPR023123">
    <property type="entry name" value="Tubulin_C"/>
</dbReference>
<dbReference type="InterPro" id="IPR017975">
    <property type="entry name" value="Tubulin_CS"/>
</dbReference>
<dbReference type="InterPro" id="IPR003008">
    <property type="entry name" value="Tubulin_FtsZ_GTPase"/>
</dbReference>
<dbReference type="PANTHER" id="PTHR11588">
    <property type="entry name" value="TUBULIN"/>
    <property type="match status" value="1"/>
</dbReference>
<dbReference type="Pfam" id="PF00091">
    <property type="entry name" value="Tubulin"/>
    <property type="match status" value="1"/>
</dbReference>
<dbReference type="Pfam" id="PF03953">
    <property type="entry name" value="Tubulin_C"/>
    <property type="match status" value="1"/>
</dbReference>
<dbReference type="PRINTS" id="PR01162">
    <property type="entry name" value="ALPHATUBULIN"/>
</dbReference>
<dbReference type="PRINTS" id="PR01161">
    <property type="entry name" value="TUBULIN"/>
</dbReference>
<dbReference type="SMART" id="SM00864">
    <property type="entry name" value="Tubulin"/>
    <property type="match status" value="1"/>
</dbReference>
<dbReference type="SMART" id="SM00865">
    <property type="entry name" value="Tubulin_C"/>
    <property type="match status" value="1"/>
</dbReference>
<dbReference type="SUPFAM" id="SSF55307">
    <property type="entry name" value="Tubulin C-terminal domain-like"/>
    <property type="match status" value="1"/>
</dbReference>
<dbReference type="SUPFAM" id="SSF52490">
    <property type="entry name" value="Tubulin nucleotide-binding domain-like"/>
    <property type="match status" value="1"/>
</dbReference>
<dbReference type="PROSITE" id="PS00227">
    <property type="entry name" value="TUBULIN"/>
    <property type="match status" value="1"/>
</dbReference>
<feature type="chain" id="PRO_0000048239" description="Tubulin alpha-1 chain">
    <location>
        <begin position="1"/>
        <end position="447"/>
    </location>
</feature>
<feature type="active site" evidence="5">
    <location>
        <position position="255"/>
    </location>
</feature>
<feature type="binding site" evidence="1">
    <location>
        <position position="11"/>
    </location>
    <ligand>
        <name>GTP</name>
        <dbReference type="ChEBI" id="CHEBI:37565"/>
    </ligand>
</feature>
<feature type="binding site" evidence="1">
    <location>
        <position position="72"/>
    </location>
    <ligand>
        <name>GTP</name>
        <dbReference type="ChEBI" id="CHEBI:37565"/>
    </ligand>
</feature>
<feature type="binding site" evidence="1">
    <location>
        <position position="72"/>
    </location>
    <ligand>
        <name>Mg(2+)</name>
        <dbReference type="ChEBI" id="CHEBI:18420"/>
    </ligand>
</feature>
<feature type="binding site" evidence="1">
    <location>
        <position position="141"/>
    </location>
    <ligand>
        <name>GTP</name>
        <dbReference type="ChEBI" id="CHEBI:37565"/>
    </ligand>
</feature>
<feature type="binding site" evidence="1">
    <location>
        <position position="145"/>
    </location>
    <ligand>
        <name>GTP</name>
        <dbReference type="ChEBI" id="CHEBI:37565"/>
    </ligand>
</feature>
<feature type="binding site" evidence="1">
    <location>
        <position position="146"/>
    </location>
    <ligand>
        <name>GTP</name>
        <dbReference type="ChEBI" id="CHEBI:37565"/>
    </ligand>
</feature>
<feature type="binding site" evidence="1">
    <location>
        <position position="180"/>
    </location>
    <ligand>
        <name>GTP</name>
        <dbReference type="ChEBI" id="CHEBI:37565"/>
    </ligand>
</feature>
<feature type="binding site" evidence="1">
    <location>
        <position position="207"/>
    </location>
    <ligand>
        <name>GTP</name>
        <dbReference type="ChEBI" id="CHEBI:37565"/>
    </ligand>
</feature>
<feature type="binding site" evidence="1">
    <location>
        <position position="229"/>
    </location>
    <ligand>
        <name>GTP</name>
        <dbReference type="ChEBI" id="CHEBI:37565"/>
    </ligand>
</feature>
<feature type="mutagenesis site" description="Poisonous alpha-tubulins that cause lethality. Microtubules do not depolymerize." evidence="2">
    <original>D</original>
    <variation>A</variation>
    <location>
        <position position="252"/>
    </location>
</feature>
<feature type="mutagenesis site" description="Poisonous alpha-tubulins that cause lethality. Microtubules do not depolymerize." evidence="2">
    <original>E</original>
    <variation>A</variation>
    <location>
        <position position="255"/>
    </location>
</feature>
<feature type="sequence conflict" description="In Ref. 1; AAA35180." evidence="4" ref="1">
    <original>I</original>
    <variation>L</variation>
    <location>
        <position position="94"/>
    </location>
</feature>
<feature type="sequence conflict" description="In Ref. 1; AAA35180." evidence="4" ref="1">
    <original>R</original>
    <variation>G</variation>
    <location>
        <position position="327"/>
    </location>
</feature>
<feature type="strand" evidence="7">
    <location>
        <begin position="4"/>
        <end position="9"/>
    </location>
</feature>
<feature type="helix" evidence="7">
    <location>
        <begin position="10"/>
        <end position="27"/>
    </location>
</feature>
<feature type="strand" evidence="7">
    <location>
        <begin position="34"/>
        <end position="36"/>
    </location>
</feature>
<feature type="strand" evidence="7">
    <location>
        <begin position="47"/>
        <end position="50"/>
    </location>
</feature>
<feature type="turn" evidence="7">
    <location>
        <begin position="51"/>
        <end position="53"/>
    </location>
</feature>
<feature type="strand" evidence="7">
    <location>
        <begin position="54"/>
        <end position="56"/>
    </location>
</feature>
<feature type="strand" evidence="7">
    <location>
        <begin position="58"/>
        <end position="60"/>
    </location>
</feature>
<feature type="strand" evidence="7">
    <location>
        <begin position="62"/>
        <end position="64"/>
    </location>
</feature>
<feature type="strand" evidence="7">
    <location>
        <begin position="66"/>
        <end position="72"/>
    </location>
</feature>
<feature type="helix" evidence="7">
    <location>
        <begin position="73"/>
        <end position="81"/>
    </location>
</feature>
<feature type="turn" evidence="7">
    <location>
        <begin position="83"/>
        <end position="87"/>
    </location>
</feature>
<feature type="turn" evidence="7">
    <location>
        <begin position="90"/>
        <end position="92"/>
    </location>
</feature>
<feature type="strand" evidence="7">
    <location>
        <begin position="93"/>
        <end position="95"/>
    </location>
</feature>
<feature type="helix" evidence="7">
    <location>
        <begin position="104"/>
        <end position="108"/>
    </location>
</feature>
<feature type="helix" evidence="7">
    <location>
        <begin position="112"/>
        <end position="127"/>
    </location>
</feature>
<feature type="strand" evidence="7">
    <location>
        <begin position="135"/>
        <end position="145"/>
    </location>
</feature>
<feature type="turn" evidence="7">
    <location>
        <begin position="146"/>
        <end position="148"/>
    </location>
</feature>
<feature type="helix" evidence="7">
    <location>
        <begin position="149"/>
        <end position="161"/>
    </location>
</feature>
<feature type="turn" evidence="7">
    <location>
        <begin position="162"/>
        <end position="164"/>
    </location>
</feature>
<feature type="strand" evidence="7">
    <location>
        <begin position="165"/>
        <end position="173"/>
    </location>
</feature>
<feature type="helix" evidence="7">
    <location>
        <begin position="176"/>
        <end position="178"/>
    </location>
</feature>
<feature type="helix" evidence="7">
    <location>
        <begin position="184"/>
        <end position="195"/>
    </location>
</feature>
<feature type="strand" evidence="7">
    <location>
        <begin position="196"/>
        <end position="198"/>
    </location>
</feature>
<feature type="strand" evidence="7">
    <location>
        <begin position="200"/>
        <end position="206"/>
    </location>
</feature>
<feature type="helix" evidence="7">
    <location>
        <begin position="207"/>
        <end position="216"/>
    </location>
</feature>
<feature type="helix" evidence="7">
    <location>
        <begin position="225"/>
        <end position="239"/>
    </location>
</feature>
<feature type="helix" evidence="7">
    <location>
        <begin position="241"/>
        <end position="244"/>
    </location>
</feature>
<feature type="helix" evidence="7">
    <location>
        <begin position="253"/>
        <end position="260"/>
    </location>
</feature>
<feature type="strand" evidence="6">
    <location>
        <begin position="262"/>
        <end position="265"/>
    </location>
</feature>
<feature type="strand" evidence="7">
    <location>
        <begin position="270"/>
        <end position="274"/>
    </location>
</feature>
<feature type="helix" evidence="7">
    <location>
        <begin position="289"/>
        <end position="295"/>
    </location>
</feature>
<feature type="helix" evidence="7">
    <location>
        <begin position="299"/>
        <end position="301"/>
    </location>
</feature>
<feature type="strand" evidence="7">
    <location>
        <begin position="302"/>
        <end position="306"/>
    </location>
</feature>
<feature type="strand" evidence="7">
    <location>
        <begin position="313"/>
        <end position="323"/>
    </location>
</feature>
<feature type="helix" evidence="7">
    <location>
        <begin position="326"/>
        <end position="338"/>
    </location>
</feature>
<feature type="strand" evidence="7">
    <location>
        <begin position="352"/>
        <end position="357"/>
    </location>
</feature>
<feature type="strand" evidence="7">
    <location>
        <begin position="365"/>
        <end position="369"/>
    </location>
</feature>
<feature type="strand" evidence="7">
    <location>
        <begin position="373"/>
        <end position="382"/>
    </location>
</feature>
<feature type="helix" evidence="7">
    <location>
        <begin position="383"/>
        <end position="385"/>
    </location>
</feature>
<feature type="helix" evidence="7">
    <location>
        <begin position="386"/>
        <end position="400"/>
    </location>
</feature>
<feature type="turn" evidence="7">
    <location>
        <begin position="401"/>
        <end position="405"/>
    </location>
</feature>
<feature type="helix" evidence="7">
    <location>
        <begin position="406"/>
        <end position="410"/>
    </location>
</feature>
<feature type="turn" evidence="7">
    <location>
        <begin position="411"/>
        <end position="413"/>
    </location>
</feature>
<feature type="helix" evidence="7">
    <location>
        <begin position="417"/>
        <end position="436"/>
    </location>
</feature>